<reference key="1">
    <citation type="journal article" date="2007" name="ISME J.">
        <title>Population level functional diversity in a microbial community revealed by comparative genomic and metagenomic analyses.</title>
        <authorList>
            <person name="Bhaya D."/>
            <person name="Grossman A.R."/>
            <person name="Steunou A.-S."/>
            <person name="Khuri N."/>
            <person name="Cohan F.M."/>
            <person name="Hamamura N."/>
            <person name="Melendrez M.C."/>
            <person name="Bateson M.M."/>
            <person name="Ward D.M."/>
            <person name="Heidelberg J.F."/>
        </authorList>
    </citation>
    <scope>NUCLEOTIDE SEQUENCE [LARGE SCALE GENOMIC DNA]</scope>
    <source>
        <strain>JA-3-3Ab</strain>
    </source>
</reference>
<sequence length="225" mass="24456">MTQVKTQPPEEVALQLIVGLGNPGPQYANTRHNCGFMVVDQLAERWGIPLALEKRFQGSYGEGFALGGKRRLLKPETYMNRSGEAVRAVLDWYKLDPASVLVVYDDMDLPLGRLRLRGSGSAGGHNGMKSVIEHLGSEAFPRLRLGVGRPKGNQDRVGHVLGSFEPAEQAVLDRVLRAAVAAVECCLQEGLKTAMNRFNPLDFSGPDRQDQPAPLNPAKTAPGES</sequence>
<organism>
    <name type="scientific">Synechococcus sp. (strain JA-3-3Ab)</name>
    <name type="common">Cyanobacteria bacterium Yellowstone A-Prime</name>
    <dbReference type="NCBI Taxonomy" id="321327"/>
    <lineage>
        <taxon>Bacteria</taxon>
        <taxon>Bacillati</taxon>
        <taxon>Cyanobacteriota</taxon>
        <taxon>Cyanophyceae</taxon>
        <taxon>Synechococcales</taxon>
        <taxon>Synechococcaceae</taxon>
        <taxon>Synechococcus</taxon>
    </lineage>
</organism>
<comment type="function">
    <text evidence="1">Hydrolyzes ribosome-free peptidyl-tRNAs (with 1 or more amino acids incorporated), which drop off the ribosome during protein synthesis, or as a result of ribosome stalling.</text>
</comment>
<comment type="function">
    <text evidence="1">Catalyzes the release of premature peptidyl moieties from peptidyl-tRNA molecules trapped in stalled 50S ribosomal subunits, and thus maintains levels of free tRNAs and 50S ribosomes.</text>
</comment>
<comment type="catalytic activity">
    <reaction evidence="1">
        <text>an N-acyl-L-alpha-aminoacyl-tRNA + H2O = an N-acyl-L-amino acid + a tRNA + H(+)</text>
        <dbReference type="Rhea" id="RHEA:54448"/>
        <dbReference type="Rhea" id="RHEA-COMP:10123"/>
        <dbReference type="Rhea" id="RHEA-COMP:13883"/>
        <dbReference type="ChEBI" id="CHEBI:15377"/>
        <dbReference type="ChEBI" id="CHEBI:15378"/>
        <dbReference type="ChEBI" id="CHEBI:59874"/>
        <dbReference type="ChEBI" id="CHEBI:78442"/>
        <dbReference type="ChEBI" id="CHEBI:138191"/>
        <dbReference type="EC" id="3.1.1.29"/>
    </reaction>
</comment>
<comment type="subunit">
    <text evidence="1">Monomer.</text>
</comment>
<comment type="subcellular location">
    <subcellularLocation>
        <location evidence="1">Cytoplasm</location>
    </subcellularLocation>
</comment>
<comment type="similarity">
    <text evidence="1">Belongs to the PTH family.</text>
</comment>
<name>PTH_SYNJA</name>
<evidence type="ECO:0000255" key="1">
    <source>
        <dbReference type="HAMAP-Rule" id="MF_00083"/>
    </source>
</evidence>
<evidence type="ECO:0000256" key="2">
    <source>
        <dbReference type="SAM" id="MobiDB-lite"/>
    </source>
</evidence>
<gene>
    <name evidence="1" type="primary">pth</name>
    <name type="ordered locus">CYA_1253</name>
</gene>
<proteinExistence type="inferred from homology"/>
<keyword id="KW-0963">Cytoplasm</keyword>
<keyword id="KW-0378">Hydrolase</keyword>
<keyword id="KW-0694">RNA-binding</keyword>
<keyword id="KW-0820">tRNA-binding</keyword>
<accession>Q2JV16</accession>
<feature type="chain" id="PRO_0000264127" description="Peptidyl-tRNA hydrolase">
    <location>
        <begin position="1"/>
        <end position="225"/>
    </location>
</feature>
<feature type="region of interest" description="Disordered" evidence="2">
    <location>
        <begin position="198"/>
        <end position="225"/>
    </location>
</feature>
<feature type="active site" description="Proton acceptor" evidence="1">
    <location>
        <position position="32"/>
    </location>
</feature>
<feature type="binding site" evidence="1">
    <location>
        <position position="27"/>
    </location>
    <ligand>
        <name>tRNA</name>
        <dbReference type="ChEBI" id="CHEBI:17843"/>
    </ligand>
</feature>
<feature type="binding site" evidence="1">
    <location>
        <position position="78"/>
    </location>
    <ligand>
        <name>tRNA</name>
        <dbReference type="ChEBI" id="CHEBI:17843"/>
    </ligand>
</feature>
<feature type="binding site" evidence="1">
    <location>
        <position position="80"/>
    </location>
    <ligand>
        <name>tRNA</name>
        <dbReference type="ChEBI" id="CHEBI:17843"/>
    </ligand>
</feature>
<feature type="binding site" evidence="1">
    <location>
        <position position="126"/>
    </location>
    <ligand>
        <name>tRNA</name>
        <dbReference type="ChEBI" id="CHEBI:17843"/>
    </ligand>
</feature>
<feature type="site" description="Discriminates between blocked and unblocked aminoacyl-tRNA" evidence="1">
    <location>
        <position position="22"/>
    </location>
</feature>
<feature type="site" description="Stabilizes the basic form of H active site to accept a proton" evidence="1">
    <location>
        <position position="105"/>
    </location>
</feature>
<protein>
    <recommendedName>
        <fullName evidence="1">Peptidyl-tRNA hydrolase</fullName>
        <shortName evidence="1">Pth</shortName>
        <ecNumber evidence="1">3.1.1.29</ecNumber>
    </recommendedName>
</protein>
<dbReference type="EC" id="3.1.1.29" evidence="1"/>
<dbReference type="EMBL" id="CP000239">
    <property type="protein sequence ID" value="ABC99436.1"/>
    <property type="molecule type" value="Genomic_DNA"/>
</dbReference>
<dbReference type="RefSeq" id="WP_011430116.1">
    <property type="nucleotide sequence ID" value="NC_007775.1"/>
</dbReference>
<dbReference type="SMR" id="Q2JV16"/>
<dbReference type="STRING" id="321327.CYA_1253"/>
<dbReference type="KEGG" id="cya:CYA_1253"/>
<dbReference type="eggNOG" id="COG0193">
    <property type="taxonomic scope" value="Bacteria"/>
</dbReference>
<dbReference type="HOGENOM" id="CLU_062456_4_1_3"/>
<dbReference type="OrthoDB" id="9800507at2"/>
<dbReference type="Proteomes" id="UP000008818">
    <property type="component" value="Chromosome"/>
</dbReference>
<dbReference type="GO" id="GO:0005737">
    <property type="term" value="C:cytoplasm"/>
    <property type="evidence" value="ECO:0007669"/>
    <property type="project" value="UniProtKB-SubCell"/>
</dbReference>
<dbReference type="GO" id="GO:0004045">
    <property type="term" value="F:peptidyl-tRNA hydrolase activity"/>
    <property type="evidence" value="ECO:0007669"/>
    <property type="project" value="UniProtKB-UniRule"/>
</dbReference>
<dbReference type="GO" id="GO:0000049">
    <property type="term" value="F:tRNA binding"/>
    <property type="evidence" value="ECO:0007669"/>
    <property type="project" value="UniProtKB-UniRule"/>
</dbReference>
<dbReference type="GO" id="GO:0006515">
    <property type="term" value="P:protein quality control for misfolded or incompletely synthesized proteins"/>
    <property type="evidence" value="ECO:0007669"/>
    <property type="project" value="UniProtKB-UniRule"/>
</dbReference>
<dbReference type="GO" id="GO:0072344">
    <property type="term" value="P:rescue of stalled ribosome"/>
    <property type="evidence" value="ECO:0007669"/>
    <property type="project" value="UniProtKB-UniRule"/>
</dbReference>
<dbReference type="CDD" id="cd00462">
    <property type="entry name" value="PTH"/>
    <property type="match status" value="1"/>
</dbReference>
<dbReference type="FunFam" id="3.40.50.1470:FF:000001">
    <property type="entry name" value="Peptidyl-tRNA hydrolase"/>
    <property type="match status" value="1"/>
</dbReference>
<dbReference type="Gene3D" id="3.40.50.1470">
    <property type="entry name" value="Peptidyl-tRNA hydrolase"/>
    <property type="match status" value="1"/>
</dbReference>
<dbReference type="HAMAP" id="MF_00083">
    <property type="entry name" value="Pept_tRNA_hydro_bact"/>
    <property type="match status" value="1"/>
</dbReference>
<dbReference type="InterPro" id="IPR001328">
    <property type="entry name" value="Pept_tRNA_hydro"/>
</dbReference>
<dbReference type="InterPro" id="IPR018171">
    <property type="entry name" value="Pept_tRNA_hydro_CS"/>
</dbReference>
<dbReference type="InterPro" id="IPR036416">
    <property type="entry name" value="Pept_tRNA_hydro_sf"/>
</dbReference>
<dbReference type="NCBIfam" id="TIGR00447">
    <property type="entry name" value="pth"/>
    <property type="match status" value="1"/>
</dbReference>
<dbReference type="PANTHER" id="PTHR17224">
    <property type="entry name" value="PEPTIDYL-TRNA HYDROLASE"/>
    <property type="match status" value="1"/>
</dbReference>
<dbReference type="PANTHER" id="PTHR17224:SF1">
    <property type="entry name" value="PEPTIDYL-TRNA HYDROLASE"/>
    <property type="match status" value="1"/>
</dbReference>
<dbReference type="Pfam" id="PF01195">
    <property type="entry name" value="Pept_tRNA_hydro"/>
    <property type="match status" value="1"/>
</dbReference>
<dbReference type="SUPFAM" id="SSF53178">
    <property type="entry name" value="Peptidyl-tRNA hydrolase-like"/>
    <property type="match status" value="1"/>
</dbReference>
<dbReference type="PROSITE" id="PS01195">
    <property type="entry name" value="PEPT_TRNA_HYDROL_1"/>
    <property type="match status" value="1"/>
</dbReference>
<dbReference type="PROSITE" id="PS01196">
    <property type="entry name" value="PEPT_TRNA_HYDROL_2"/>
    <property type="match status" value="1"/>
</dbReference>